<feature type="chain" id="PRO_0000266298" description="Guanylate kinase">
    <location>
        <begin position="1"/>
        <end position="227"/>
    </location>
</feature>
<feature type="domain" description="Guanylate kinase-like" evidence="1">
    <location>
        <begin position="21"/>
        <end position="199"/>
    </location>
</feature>
<feature type="binding site" evidence="1">
    <location>
        <begin position="28"/>
        <end position="35"/>
    </location>
    <ligand>
        <name>ATP</name>
        <dbReference type="ChEBI" id="CHEBI:30616"/>
    </ligand>
</feature>
<keyword id="KW-0067">ATP-binding</keyword>
<keyword id="KW-0963">Cytoplasm</keyword>
<keyword id="KW-0418">Kinase</keyword>
<keyword id="KW-0547">Nucleotide-binding</keyword>
<keyword id="KW-0808">Transferase</keyword>
<dbReference type="EC" id="2.7.4.8" evidence="1"/>
<dbReference type="EMBL" id="CP000086">
    <property type="protein sequence ID" value="ABC37073.1"/>
    <property type="molecule type" value="Genomic_DNA"/>
</dbReference>
<dbReference type="RefSeq" id="WP_009889748.1">
    <property type="nucleotide sequence ID" value="NZ_CP008785.1"/>
</dbReference>
<dbReference type="SMR" id="Q2SY72"/>
<dbReference type="GeneID" id="45121321"/>
<dbReference type="KEGG" id="bte:BTH_I1586"/>
<dbReference type="HOGENOM" id="CLU_001715_1_0_4"/>
<dbReference type="Proteomes" id="UP000001930">
    <property type="component" value="Chromosome I"/>
</dbReference>
<dbReference type="GO" id="GO:0005829">
    <property type="term" value="C:cytosol"/>
    <property type="evidence" value="ECO:0007669"/>
    <property type="project" value="TreeGrafter"/>
</dbReference>
<dbReference type="GO" id="GO:0005524">
    <property type="term" value="F:ATP binding"/>
    <property type="evidence" value="ECO:0007669"/>
    <property type="project" value="UniProtKB-UniRule"/>
</dbReference>
<dbReference type="GO" id="GO:0004385">
    <property type="term" value="F:guanylate kinase activity"/>
    <property type="evidence" value="ECO:0007669"/>
    <property type="project" value="UniProtKB-UniRule"/>
</dbReference>
<dbReference type="CDD" id="cd00071">
    <property type="entry name" value="GMPK"/>
    <property type="match status" value="1"/>
</dbReference>
<dbReference type="FunFam" id="3.30.63.10:FF:000002">
    <property type="entry name" value="Guanylate kinase 1"/>
    <property type="match status" value="1"/>
</dbReference>
<dbReference type="Gene3D" id="3.30.63.10">
    <property type="entry name" value="Guanylate Kinase phosphate binding domain"/>
    <property type="match status" value="1"/>
</dbReference>
<dbReference type="Gene3D" id="3.40.50.300">
    <property type="entry name" value="P-loop containing nucleotide triphosphate hydrolases"/>
    <property type="match status" value="1"/>
</dbReference>
<dbReference type="HAMAP" id="MF_00328">
    <property type="entry name" value="Guanylate_kinase"/>
    <property type="match status" value="1"/>
</dbReference>
<dbReference type="InterPro" id="IPR008145">
    <property type="entry name" value="GK/Ca_channel_bsu"/>
</dbReference>
<dbReference type="InterPro" id="IPR008144">
    <property type="entry name" value="Guanylate_kin-like_dom"/>
</dbReference>
<dbReference type="InterPro" id="IPR017665">
    <property type="entry name" value="Guanylate_kinase"/>
</dbReference>
<dbReference type="InterPro" id="IPR020590">
    <property type="entry name" value="Guanylate_kinase_CS"/>
</dbReference>
<dbReference type="InterPro" id="IPR027417">
    <property type="entry name" value="P-loop_NTPase"/>
</dbReference>
<dbReference type="NCBIfam" id="TIGR03263">
    <property type="entry name" value="guanyl_kin"/>
    <property type="match status" value="1"/>
</dbReference>
<dbReference type="PANTHER" id="PTHR23117:SF13">
    <property type="entry name" value="GUANYLATE KINASE"/>
    <property type="match status" value="1"/>
</dbReference>
<dbReference type="PANTHER" id="PTHR23117">
    <property type="entry name" value="GUANYLATE KINASE-RELATED"/>
    <property type="match status" value="1"/>
</dbReference>
<dbReference type="Pfam" id="PF00625">
    <property type="entry name" value="Guanylate_kin"/>
    <property type="match status" value="1"/>
</dbReference>
<dbReference type="SMART" id="SM00072">
    <property type="entry name" value="GuKc"/>
    <property type="match status" value="1"/>
</dbReference>
<dbReference type="SUPFAM" id="SSF52540">
    <property type="entry name" value="P-loop containing nucleoside triphosphate hydrolases"/>
    <property type="match status" value="1"/>
</dbReference>
<dbReference type="PROSITE" id="PS00856">
    <property type="entry name" value="GUANYLATE_KINASE_1"/>
    <property type="match status" value="1"/>
</dbReference>
<dbReference type="PROSITE" id="PS50052">
    <property type="entry name" value="GUANYLATE_KINASE_2"/>
    <property type="match status" value="1"/>
</dbReference>
<organism>
    <name type="scientific">Burkholderia thailandensis (strain ATCC 700388 / DSM 13276 / CCUG 48851 / CIP 106301 / E264)</name>
    <dbReference type="NCBI Taxonomy" id="271848"/>
    <lineage>
        <taxon>Bacteria</taxon>
        <taxon>Pseudomonadati</taxon>
        <taxon>Pseudomonadota</taxon>
        <taxon>Betaproteobacteria</taxon>
        <taxon>Burkholderiales</taxon>
        <taxon>Burkholderiaceae</taxon>
        <taxon>Burkholderia</taxon>
        <taxon>pseudomallei group</taxon>
    </lineage>
</organism>
<sequence>MTDSNRGGAAAHSLHAGVYPGNLFMVVAPSGAGKSTLVNALLSKDPEICLSISYTTRKPRSGEQDGQHYHFTTVEDFRARHASHEFLESAEVHGNYYGTSRVWIEEQMKSGHDVLLEIDWQGAQQVKKQFRNAVGIFILPPSLAALEERLKKRGQDEPNVITRRLLAAGSEIAHAAEAEYVVINETFEHALAELECIVAATRLRFTSQYARHAELFVELGIHLPHAE</sequence>
<evidence type="ECO:0000255" key="1">
    <source>
        <dbReference type="HAMAP-Rule" id="MF_00328"/>
    </source>
</evidence>
<comment type="function">
    <text evidence="1">Essential for recycling GMP and indirectly, cGMP.</text>
</comment>
<comment type="catalytic activity">
    <reaction evidence="1">
        <text>GMP + ATP = GDP + ADP</text>
        <dbReference type="Rhea" id="RHEA:20780"/>
        <dbReference type="ChEBI" id="CHEBI:30616"/>
        <dbReference type="ChEBI" id="CHEBI:58115"/>
        <dbReference type="ChEBI" id="CHEBI:58189"/>
        <dbReference type="ChEBI" id="CHEBI:456216"/>
        <dbReference type="EC" id="2.7.4.8"/>
    </reaction>
</comment>
<comment type="subcellular location">
    <subcellularLocation>
        <location evidence="1">Cytoplasm</location>
    </subcellularLocation>
</comment>
<comment type="similarity">
    <text evidence="1">Belongs to the guanylate kinase family.</text>
</comment>
<protein>
    <recommendedName>
        <fullName evidence="1">Guanylate kinase</fullName>
        <ecNumber evidence="1">2.7.4.8</ecNumber>
    </recommendedName>
    <alternativeName>
        <fullName evidence="1">GMP kinase</fullName>
    </alternativeName>
</protein>
<proteinExistence type="inferred from homology"/>
<reference key="1">
    <citation type="journal article" date="2005" name="BMC Genomics">
        <title>Bacterial genome adaptation to niches: divergence of the potential virulence genes in three Burkholderia species of different survival strategies.</title>
        <authorList>
            <person name="Kim H.S."/>
            <person name="Schell M.A."/>
            <person name="Yu Y."/>
            <person name="Ulrich R.L."/>
            <person name="Sarria S.H."/>
            <person name="Nierman W.C."/>
            <person name="DeShazer D."/>
        </authorList>
    </citation>
    <scope>NUCLEOTIDE SEQUENCE [LARGE SCALE GENOMIC DNA]</scope>
    <source>
        <strain>ATCC 700388 / DSM 13276 / CCUG 48851 / CIP 106301 / E264</strain>
    </source>
</reference>
<gene>
    <name evidence="1" type="primary">gmk</name>
    <name type="ordered locus">BTH_I1586</name>
</gene>
<accession>Q2SY72</accession>
<name>KGUA_BURTA</name>